<keyword id="KW-0025">Alternative splicing</keyword>
<keyword id="KW-1003">Cell membrane</keyword>
<keyword id="KW-0968">Cytoplasmic vesicle</keyword>
<keyword id="KW-0446">Lipid-binding</keyword>
<keyword id="KW-0449">Lipoprotein</keyword>
<keyword id="KW-0458">Lysosome</keyword>
<keyword id="KW-0472">Membrane</keyword>
<keyword id="KW-0564">Palmitate</keyword>
<keyword id="KW-0597">Phosphoprotein</keyword>
<keyword id="KW-1267">Proteomics identification</keyword>
<keyword id="KW-1185">Reference proteome</keyword>
<keyword id="KW-0813">Transport</keyword>
<accession>Q8N565</accession>
<accession>Q53R89</accession>
<accession>Q53TC1</accession>
<accession>Q5XKB6</accession>
<accession>Q9NWC9</accession>
<accession>Q9P1S1</accession>
<evidence type="ECO:0000250" key="1">
    <source>
        <dbReference type="UniProtKB" id="Q6NVG5"/>
    </source>
</evidence>
<evidence type="ECO:0000269" key="2">
    <source>
    </source>
</evidence>
<evidence type="ECO:0000269" key="3">
    <source>
    </source>
</evidence>
<evidence type="ECO:0000269" key="4">
    <source>
    </source>
</evidence>
<evidence type="ECO:0000269" key="5">
    <source>
    </source>
</evidence>
<evidence type="ECO:0000303" key="6">
    <source>
    </source>
</evidence>
<evidence type="ECO:0000305" key="7"/>
<evidence type="ECO:0007744" key="8">
    <source>
    </source>
</evidence>
<feature type="chain" id="PRO_0000292175" description="Melanoregulin">
    <location>
        <begin position="1"/>
        <end position="214"/>
    </location>
</feature>
<feature type="short sequence motif" description="Cholesterol-binding sequence motif" evidence="1">
    <location>
        <begin position="162"/>
        <end position="172"/>
    </location>
</feature>
<feature type="modified residue" description="Phosphoserine" evidence="8">
    <location>
        <position position="213"/>
    </location>
</feature>
<feature type="splice variant" id="VSP_026387" description="In isoform 2." evidence="6">
    <original>YLPFPSP</original>
    <variation>LWGDLSCRLAHMQGVLH</variation>
    <location>
        <begin position="208"/>
        <end position="214"/>
    </location>
</feature>
<feature type="sequence variant" id="VAR_053923" description="In dbSNP:rs1864253." evidence="2 3">
    <original>G</original>
    <variation>R</variation>
    <location>
        <position position="15"/>
    </location>
</feature>
<feature type="sequence conflict" description="In Ref. 1; BAA91453." evidence="7" ref="1">
    <original>N</original>
    <variation>S</variation>
    <location>
        <position position="154"/>
    </location>
</feature>
<feature type="sequence conflict" description="In Ref. 4; AAF65179." evidence="7" ref="4">
    <original>F</original>
    <variation>L</variation>
    <location>
        <position position="156"/>
    </location>
</feature>
<organism>
    <name type="scientific">Homo sapiens</name>
    <name type="common">Human</name>
    <dbReference type="NCBI Taxonomy" id="9606"/>
    <lineage>
        <taxon>Eukaryota</taxon>
        <taxon>Metazoa</taxon>
        <taxon>Chordata</taxon>
        <taxon>Craniata</taxon>
        <taxon>Vertebrata</taxon>
        <taxon>Euteleostomi</taxon>
        <taxon>Mammalia</taxon>
        <taxon>Eutheria</taxon>
        <taxon>Euarchontoglires</taxon>
        <taxon>Primates</taxon>
        <taxon>Haplorrhini</taxon>
        <taxon>Catarrhini</taxon>
        <taxon>Hominidae</taxon>
        <taxon>Homo</taxon>
    </lineage>
</organism>
<gene>
    <name type="primary">MREG</name>
    <name type="synonym">DSU</name>
    <name type="ORF">HDCGA21P</name>
</gene>
<dbReference type="EMBL" id="AK000978">
    <property type="protein sequence ID" value="BAA91453.1"/>
    <property type="molecule type" value="mRNA"/>
</dbReference>
<dbReference type="EMBL" id="AC010686">
    <property type="protein sequence ID" value="AAY14656.1"/>
    <property type="molecule type" value="Genomic_DNA"/>
</dbReference>
<dbReference type="EMBL" id="AC093382">
    <property type="protein sequence ID" value="AAY14719.1"/>
    <property type="molecule type" value="Genomic_DNA"/>
</dbReference>
<dbReference type="EMBL" id="BC032747">
    <property type="protein sequence ID" value="AAH32747.1"/>
    <property type="molecule type" value="mRNA"/>
</dbReference>
<dbReference type="EMBL" id="BC082990">
    <property type="protein sequence ID" value="AAH82990.1"/>
    <property type="molecule type" value="mRNA"/>
</dbReference>
<dbReference type="EMBL" id="AF068290">
    <property type="protein sequence ID" value="AAF65179.1"/>
    <property type="molecule type" value="mRNA"/>
</dbReference>
<dbReference type="CCDS" id="CCDS46513.1">
    <molecule id="Q8N565-1"/>
</dbReference>
<dbReference type="RefSeq" id="NP_060470.2">
    <molecule id="Q8N565-1"/>
    <property type="nucleotide sequence ID" value="NM_018000.3"/>
</dbReference>
<dbReference type="SMR" id="Q8N565"/>
<dbReference type="BioGRID" id="120813">
    <property type="interactions" value="22"/>
</dbReference>
<dbReference type="FunCoup" id="Q8N565">
    <property type="interactions" value="237"/>
</dbReference>
<dbReference type="IntAct" id="Q8N565">
    <property type="interactions" value="12"/>
</dbReference>
<dbReference type="MINT" id="Q8N565"/>
<dbReference type="STRING" id="9606.ENSP00000263268"/>
<dbReference type="iPTMnet" id="Q8N565"/>
<dbReference type="PhosphoSitePlus" id="Q8N565"/>
<dbReference type="SwissPalm" id="Q8N565"/>
<dbReference type="BioMuta" id="MREG"/>
<dbReference type="DMDM" id="74751016"/>
<dbReference type="jPOST" id="Q8N565"/>
<dbReference type="MassIVE" id="Q8N565"/>
<dbReference type="PaxDb" id="9606-ENSP00000484331"/>
<dbReference type="PeptideAtlas" id="Q8N565"/>
<dbReference type="ProteomicsDB" id="72005">
    <molecule id="Q8N565-1"/>
</dbReference>
<dbReference type="ProteomicsDB" id="72006">
    <molecule id="Q8N565-2"/>
</dbReference>
<dbReference type="Pumba" id="Q8N565"/>
<dbReference type="Antibodypedia" id="34232">
    <property type="antibodies" value="170 antibodies from 19 providers"/>
</dbReference>
<dbReference type="DNASU" id="55686"/>
<dbReference type="Ensembl" id="ENST00000263268.11">
    <molecule id="Q8N565-1"/>
    <property type="protein sequence ID" value="ENSP00000263268.6"/>
    <property type="gene ID" value="ENSG00000118242.17"/>
</dbReference>
<dbReference type="GeneID" id="55686"/>
<dbReference type="KEGG" id="hsa:55686"/>
<dbReference type="MANE-Select" id="ENST00000263268.11">
    <property type="protein sequence ID" value="ENSP00000263268.6"/>
    <property type="RefSeq nucleotide sequence ID" value="NM_018000.3"/>
    <property type="RefSeq protein sequence ID" value="NP_060470.2"/>
</dbReference>
<dbReference type="UCSC" id="uc002vfo.4">
    <molecule id="Q8N565-1"/>
    <property type="organism name" value="human"/>
</dbReference>
<dbReference type="AGR" id="HGNC:25478"/>
<dbReference type="CTD" id="55686"/>
<dbReference type="DisGeNET" id="55686"/>
<dbReference type="GeneCards" id="MREG"/>
<dbReference type="HGNC" id="HGNC:25478">
    <property type="gene designation" value="MREG"/>
</dbReference>
<dbReference type="HPA" id="ENSG00000118242">
    <property type="expression patterns" value="Tissue enhanced (retina)"/>
</dbReference>
<dbReference type="MIM" id="609207">
    <property type="type" value="gene"/>
</dbReference>
<dbReference type="neXtProt" id="NX_Q8N565"/>
<dbReference type="OpenTargets" id="ENSG00000118242"/>
<dbReference type="PharmGKB" id="PA162396174"/>
<dbReference type="VEuPathDB" id="HostDB:ENSG00000118242"/>
<dbReference type="eggNOG" id="ENOG502S05X">
    <property type="taxonomic scope" value="Eukaryota"/>
</dbReference>
<dbReference type="GeneTree" id="ENSGT00390000008926"/>
<dbReference type="HOGENOM" id="CLU_105265_0_0_1"/>
<dbReference type="InParanoid" id="Q8N565"/>
<dbReference type="OMA" id="CRCLEEP"/>
<dbReference type="OrthoDB" id="10015106at2759"/>
<dbReference type="PAN-GO" id="Q8N565">
    <property type="GO annotations" value="3 GO annotations based on evolutionary models"/>
</dbReference>
<dbReference type="PhylomeDB" id="Q8N565"/>
<dbReference type="TreeFam" id="TF334733"/>
<dbReference type="PathwayCommons" id="Q8N565"/>
<dbReference type="SignaLink" id="Q8N565"/>
<dbReference type="BioGRID-ORCS" id="55686">
    <property type="hits" value="14 hits in 1155 CRISPR screens"/>
</dbReference>
<dbReference type="ChiTaRS" id="MREG">
    <property type="organism name" value="human"/>
</dbReference>
<dbReference type="GenomeRNAi" id="55686"/>
<dbReference type="Pharos" id="Q8N565">
    <property type="development level" value="Tbio"/>
</dbReference>
<dbReference type="PRO" id="PR:Q8N565"/>
<dbReference type="Proteomes" id="UP000005640">
    <property type="component" value="Chromosome 2"/>
</dbReference>
<dbReference type="RNAct" id="Q8N565">
    <property type="molecule type" value="protein"/>
</dbReference>
<dbReference type="Bgee" id="ENSG00000118242">
    <property type="expression patterns" value="Expressed in amniotic fluid and 156 other cell types or tissues"/>
</dbReference>
<dbReference type="ExpressionAtlas" id="Q8N565">
    <property type="expression patterns" value="baseline and differential"/>
</dbReference>
<dbReference type="GO" id="GO:0016324">
    <property type="term" value="C:apical plasma membrane"/>
    <property type="evidence" value="ECO:0007669"/>
    <property type="project" value="UniProtKB-SubCell"/>
</dbReference>
<dbReference type="GO" id="GO:0030659">
    <property type="term" value="C:cytoplasmic vesicle membrane"/>
    <property type="evidence" value="ECO:0000250"/>
    <property type="project" value="UniProtKB"/>
</dbReference>
<dbReference type="GO" id="GO:0031902">
    <property type="term" value="C:late endosome membrane"/>
    <property type="evidence" value="ECO:0000250"/>
    <property type="project" value="UniProtKB"/>
</dbReference>
<dbReference type="GO" id="GO:0005765">
    <property type="term" value="C:lysosomal membrane"/>
    <property type="evidence" value="ECO:0007669"/>
    <property type="project" value="UniProtKB-SubCell"/>
</dbReference>
<dbReference type="GO" id="GO:0042470">
    <property type="term" value="C:melanosome"/>
    <property type="evidence" value="ECO:0000318"/>
    <property type="project" value="GO_Central"/>
</dbReference>
<dbReference type="GO" id="GO:0033162">
    <property type="term" value="C:melanosome membrane"/>
    <property type="evidence" value="ECO:0000250"/>
    <property type="project" value="UniProtKB"/>
</dbReference>
<dbReference type="GO" id="GO:0031090">
    <property type="term" value="C:organelle membrane"/>
    <property type="evidence" value="ECO:0000250"/>
    <property type="project" value="UniProtKB"/>
</dbReference>
<dbReference type="GO" id="GO:0032991">
    <property type="term" value="C:protein-containing complex"/>
    <property type="evidence" value="ECO:0007669"/>
    <property type="project" value="Ensembl"/>
</dbReference>
<dbReference type="GO" id="GO:0035091">
    <property type="term" value="F:phosphatidylinositol binding"/>
    <property type="evidence" value="ECO:0000250"/>
    <property type="project" value="UniProtKB"/>
</dbReference>
<dbReference type="GO" id="GO:0030318">
    <property type="term" value="P:melanocyte differentiation"/>
    <property type="evidence" value="ECO:0000318"/>
    <property type="project" value="GO_Central"/>
</dbReference>
<dbReference type="GO" id="GO:0032400">
    <property type="term" value="P:melanosome localization"/>
    <property type="evidence" value="ECO:0000250"/>
    <property type="project" value="UniProtKB"/>
</dbReference>
<dbReference type="GO" id="GO:0032402">
    <property type="term" value="P:melanosome transport"/>
    <property type="evidence" value="ECO:0000318"/>
    <property type="project" value="GO_Central"/>
</dbReference>
<dbReference type="GO" id="GO:0072385">
    <property type="term" value="P:minus-end-directed organelle transport along microtubule"/>
    <property type="evidence" value="ECO:0007669"/>
    <property type="project" value="Ensembl"/>
</dbReference>
<dbReference type="GO" id="GO:0090382">
    <property type="term" value="P:phagosome maturation"/>
    <property type="evidence" value="ECO:0000250"/>
    <property type="project" value="UniProtKB"/>
</dbReference>
<dbReference type="InterPro" id="IPR031638">
    <property type="entry name" value="Melanoregulin"/>
</dbReference>
<dbReference type="PANTHER" id="PTHR34340">
    <property type="entry name" value="MELANOREGULIN"/>
    <property type="match status" value="1"/>
</dbReference>
<dbReference type="PANTHER" id="PTHR34340:SF3">
    <property type="entry name" value="MELANOREGULIN"/>
    <property type="match status" value="1"/>
</dbReference>
<dbReference type="Pfam" id="PF15812">
    <property type="entry name" value="MREG"/>
    <property type="match status" value="1"/>
</dbReference>
<reference key="1">
    <citation type="journal article" date="2004" name="Nat. Genet.">
        <title>Complete sequencing and characterization of 21,243 full-length human cDNAs.</title>
        <authorList>
            <person name="Ota T."/>
            <person name="Suzuki Y."/>
            <person name="Nishikawa T."/>
            <person name="Otsuki T."/>
            <person name="Sugiyama T."/>
            <person name="Irie R."/>
            <person name="Wakamatsu A."/>
            <person name="Hayashi K."/>
            <person name="Sato H."/>
            <person name="Nagai K."/>
            <person name="Kimura K."/>
            <person name="Makita H."/>
            <person name="Sekine M."/>
            <person name="Obayashi M."/>
            <person name="Nishi T."/>
            <person name="Shibahara T."/>
            <person name="Tanaka T."/>
            <person name="Ishii S."/>
            <person name="Yamamoto J."/>
            <person name="Saito K."/>
            <person name="Kawai Y."/>
            <person name="Isono Y."/>
            <person name="Nakamura Y."/>
            <person name="Nagahari K."/>
            <person name="Murakami K."/>
            <person name="Yasuda T."/>
            <person name="Iwayanagi T."/>
            <person name="Wagatsuma M."/>
            <person name="Shiratori A."/>
            <person name="Sudo H."/>
            <person name="Hosoiri T."/>
            <person name="Kaku Y."/>
            <person name="Kodaira H."/>
            <person name="Kondo H."/>
            <person name="Sugawara M."/>
            <person name="Takahashi M."/>
            <person name="Kanda K."/>
            <person name="Yokoi T."/>
            <person name="Furuya T."/>
            <person name="Kikkawa E."/>
            <person name="Omura Y."/>
            <person name="Abe K."/>
            <person name="Kamihara K."/>
            <person name="Katsuta N."/>
            <person name="Sato K."/>
            <person name="Tanikawa M."/>
            <person name="Yamazaki M."/>
            <person name="Ninomiya K."/>
            <person name="Ishibashi T."/>
            <person name="Yamashita H."/>
            <person name="Murakawa K."/>
            <person name="Fujimori K."/>
            <person name="Tanai H."/>
            <person name="Kimata M."/>
            <person name="Watanabe M."/>
            <person name="Hiraoka S."/>
            <person name="Chiba Y."/>
            <person name="Ishida S."/>
            <person name="Ono Y."/>
            <person name="Takiguchi S."/>
            <person name="Watanabe S."/>
            <person name="Yosida M."/>
            <person name="Hotuta T."/>
            <person name="Kusano J."/>
            <person name="Kanehori K."/>
            <person name="Takahashi-Fujii A."/>
            <person name="Hara H."/>
            <person name="Tanase T.-O."/>
            <person name="Nomura Y."/>
            <person name="Togiya S."/>
            <person name="Komai F."/>
            <person name="Hara R."/>
            <person name="Takeuchi K."/>
            <person name="Arita M."/>
            <person name="Imose N."/>
            <person name="Musashino K."/>
            <person name="Yuuki H."/>
            <person name="Oshima A."/>
            <person name="Sasaki N."/>
            <person name="Aotsuka S."/>
            <person name="Yoshikawa Y."/>
            <person name="Matsunawa H."/>
            <person name="Ichihara T."/>
            <person name="Shiohata N."/>
            <person name="Sano S."/>
            <person name="Moriya S."/>
            <person name="Momiyama H."/>
            <person name="Satoh N."/>
            <person name="Takami S."/>
            <person name="Terashima Y."/>
            <person name="Suzuki O."/>
            <person name="Nakagawa S."/>
            <person name="Senoh A."/>
            <person name="Mizoguchi H."/>
            <person name="Goto Y."/>
            <person name="Shimizu F."/>
            <person name="Wakebe H."/>
            <person name="Hishigaki H."/>
            <person name="Watanabe T."/>
            <person name="Sugiyama A."/>
            <person name="Takemoto M."/>
            <person name="Kawakami B."/>
            <person name="Yamazaki M."/>
            <person name="Watanabe K."/>
            <person name="Kumagai A."/>
            <person name="Itakura S."/>
            <person name="Fukuzumi Y."/>
            <person name="Fujimori Y."/>
            <person name="Komiyama M."/>
            <person name="Tashiro H."/>
            <person name="Tanigami A."/>
            <person name="Fujiwara T."/>
            <person name="Ono T."/>
            <person name="Yamada K."/>
            <person name="Fujii Y."/>
            <person name="Ozaki K."/>
            <person name="Hirao M."/>
            <person name="Ohmori Y."/>
            <person name="Kawabata A."/>
            <person name="Hikiji T."/>
            <person name="Kobatake N."/>
            <person name="Inagaki H."/>
            <person name="Ikema Y."/>
            <person name="Okamoto S."/>
            <person name="Okitani R."/>
            <person name="Kawakami T."/>
            <person name="Noguchi S."/>
            <person name="Itoh T."/>
            <person name="Shigeta K."/>
            <person name="Senba T."/>
            <person name="Matsumura K."/>
            <person name="Nakajima Y."/>
            <person name="Mizuno T."/>
            <person name="Morinaga M."/>
            <person name="Sasaki M."/>
            <person name="Togashi T."/>
            <person name="Oyama M."/>
            <person name="Hata H."/>
            <person name="Watanabe M."/>
            <person name="Komatsu T."/>
            <person name="Mizushima-Sugano J."/>
            <person name="Satoh T."/>
            <person name="Shirai Y."/>
            <person name="Takahashi Y."/>
            <person name="Nakagawa K."/>
            <person name="Okumura K."/>
            <person name="Nagase T."/>
            <person name="Nomura N."/>
            <person name="Kikuchi H."/>
            <person name="Masuho Y."/>
            <person name="Yamashita R."/>
            <person name="Nakai K."/>
            <person name="Yada T."/>
            <person name="Nakamura Y."/>
            <person name="Ohara O."/>
            <person name="Isogai T."/>
            <person name="Sugano S."/>
        </authorList>
    </citation>
    <scope>NUCLEOTIDE SEQUENCE [LARGE SCALE MRNA] (ISOFORM 2)</scope>
    <scope>VARIANT ARG-15</scope>
    <source>
        <tissue>Embryo</tissue>
    </source>
</reference>
<reference key="2">
    <citation type="journal article" date="2005" name="Nature">
        <title>Generation and annotation of the DNA sequences of human chromosomes 2 and 4.</title>
        <authorList>
            <person name="Hillier L.W."/>
            <person name="Graves T.A."/>
            <person name="Fulton R.S."/>
            <person name="Fulton L.A."/>
            <person name="Pepin K.H."/>
            <person name="Minx P."/>
            <person name="Wagner-McPherson C."/>
            <person name="Layman D."/>
            <person name="Wylie K."/>
            <person name="Sekhon M."/>
            <person name="Becker M.C."/>
            <person name="Fewell G.A."/>
            <person name="Delehaunty K.D."/>
            <person name="Miner T.L."/>
            <person name="Nash W.E."/>
            <person name="Kremitzki C."/>
            <person name="Oddy L."/>
            <person name="Du H."/>
            <person name="Sun H."/>
            <person name="Bradshaw-Cordum H."/>
            <person name="Ali J."/>
            <person name="Carter J."/>
            <person name="Cordes M."/>
            <person name="Harris A."/>
            <person name="Isak A."/>
            <person name="van Brunt A."/>
            <person name="Nguyen C."/>
            <person name="Du F."/>
            <person name="Courtney L."/>
            <person name="Kalicki J."/>
            <person name="Ozersky P."/>
            <person name="Abbott S."/>
            <person name="Armstrong J."/>
            <person name="Belter E.A."/>
            <person name="Caruso L."/>
            <person name="Cedroni M."/>
            <person name="Cotton M."/>
            <person name="Davidson T."/>
            <person name="Desai A."/>
            <person name="Elliott G."/>
            <person name="Erb T."/>
            <person name="Fronick C."/>
            <person name="Gaige T."/>
            <person name="Haakenson W."/>
            <person name="Haglund K."/>
            <person name="Holmes A."/>
            <person name="Harkins R."/>
            <person name="Kim K."/>
            <person name="Kruchowski S.S."/>
            <person name="Strong C.M."/>
            <person name="Grewal N."/>
            <person name="Goyea E."/>
            <person name="Hou S."/>
            <person name="Levy A."/>
            <person name="Martinka S."/>
            <person name="Mead K."/>
            <person name="McLellan M.D."/>
            <person name="Meyer R."/>
            <person name="Randall-Maher J."/>
            <person name="Tomlinson C."/>
            <person name="Dauphin-Kohlberg S."/>
            <person name="Kozlowicz-Reilly A."/>
            <person name="Shah N."/>
            <person name="Swearengen-Shahid S."/>
            <person name="Snider J."/>
            <person name="Strong J.T."/>
            <person name="Thompson J."/>
            <person name="Yoakum M."/>
            <person name="Leonard S."/>
            <person name="Pearman C."/>
            <person name="Trani L."/>
            <person name="Radionenko M."/>
            <person name="Waligorski J.E."/>
            <person name="Wang C."/>
            <person name="Rock S.M."/>
            <person name="Tin-Wollam A.-M."/>
            <person name="Maupin R."/>
            <person name="Latreille P."/>
            <person name="Wendl M.C."/>
            <person name="Yang S.-P."/>
            <person name="Pohl C."/>
            <person name="Wallis J.W."/>
            <person name="Spieth J."/>
            <person name="Bieri T.A."/>
            <person name="Berkowicz N."/>
            <person name="Nelson J.O."/>
            <person name="Osborne J."/>
            <person name="Ding L."/>
            <person name="Meyer R."/>
            <person name="Sabo A."/>
            <person name="Shotland Y."/>
            <person name="Sinha P."/>
            <person name="Wohldmann P.E."/>
            <person name="Cook L.L."/>
            <person name="Hickenbotham M.T."/>
            <person name="Eldred J."/>
            <person name="Williams D."/>
            <person name="Jones T.A."/>
            <person name="She X."/>
            <person name="Ciccarelli F.D."/>
            <person name="Izaurralde E."/>
            <person name="Taylor J."/>
            <person name="Schmutz J."/>
            <person name="Myers R.M."/>
            <person name="Cox D.R."/>
            <person name="Huang X."/>
            <person name="McPherson J.D."/>
            <person name="Mardis E.R."/>
            <person name="Clifton S.W."/>
            <person name="Warren W.C."/>
            <person name="Chinwalla A.T."/>
            <person name="Eddy S.R."/>
            <person name="Marra M.A."/>
            <person name="Ovcharenko I."/>
            <person name="Furey T.S."/>
            <person name="Miller W."/>
            <person name="Eichler E.E."/>
            <person name="Bork P."/>
            <person name="Suyama M."/>
            <person name="Torrents D."/>
            <person name="Waterston R.H."/>
            <person name="Wilson R.K."/>
        </authorList>
    </citation>
    <scope>NUCLEOTIDE SEQUENCE [LARGE SCALE GENOMIC DNA]</scope>
</reference>
<reference key="3">
    <citation type="journal article" date="2004" name="Genome Res.">
        <title>The status, quality, and expansion of the NIH full-length cDNA project: the Mammalian Gene Collection (MGC).</title>
        <authorList>
            <consortium name="The MGC Project Team"/>
        </authorList>
    </citation>
    <scope>NUCLEOTIDE SEQUENCE [LARGE SCALE MRNA] (ISOFORM 1)</scope>
    <scope>VARIANT ARG-15</scope>
    <source>
        <tissue>Duodenum</tissue>
        <tissue>Skin</tissue>
    </source>
</reference>
<reference key="4">
    <citation type="submission" date="1998-05" db="EMBL/GenBank/DDBJ databases">
        <title>A novel gene from human dendritic cell.</title>
        <authorList>
            <person name="Zhao Z."/>
            <person name="Huang X."/>
            <person name="Li N."/>
            <person name="Zhu X."/>
            <person name="Cao X."/>
        </authorList>
    </citation>
    <scope>NUCLEOTIDE SEQUENCE [LARGE SCALE MRNA] OF 70-214 (ISOFORM 1)</scope>
    <source>
        <tissue>Dendritic cell</tissue>
    </source>
</reference>
<reference key="5">
    <citation type="journal article" date="2007" name="Biochemistry">
        <title>The tetraspanin protein peripherin-2 forms a complex with melanoregulin, a putative membrane fusion regulator.</title>
        <authorList>
            <person name="Boesze-Battaglia K."/>
            <person name="Song H."/>
            <person name="Sokolov M."/>
            <person name="Lillo C."/>
            <person name="Pankoski-Walker L."/>
            <person name="Gretzula C."/>
            <person name="Gallagher B."/>
            <person name="Rachel R.A."/>
            <person name="Jenkins N.A."/>
            <person name="Copeland N.G."/>
            <person name="Morris F."/>
            <person name="Jacob J."/>
            <person name="Yeagle P."/>
            <person name="Williams D.S."/>
            <person name="Damek-Poprawa M."/>
        </authorList>
    </citation>
    <scope>TISSUE SPECIFICITY</scope>
</reference>
<reference key="6">
    <citation type="journal article" date="2009" name="J. Biol. Chem.">
        <title>Melanoregulin (MREG) modulates lysosome function in pigment epithelial cells.</title>
        <authorList>
            <person name="Damek-Poprawa M."/>
            <person name="Diemer T."/>
            <person name="Lopes V.S."/>
            <person name="Lillo C."/>
            <person name="Harper D.C."/>
            <person name="Marks M.S."/>
            <person name="Wu Y."/>
            <person name="Sparrow J.R."/>
            <person name="Rachel R.A."/>
            <person name="Williams D.S."/>
            <person name="Boesze-Battaglia K."/>
        </authorList>
    </citation>
    <scope>FUNCTION</scope>
</reference>
<reference key="7">
    <citation type="journal article" date="2011" name="Sci. Signal.">
        <title>System-wide temporal characterization of the proteome and phosphoproteome of human embryonic stem cell differentiation.</title>
        <authorList>
            <person name="Rigbolt K.T."/>
            <person name="Prokhorova T.A."/>
            <person name="Akimov V."/>
            <person name="Henningsen J."/>
            <person name="Johansen P.T."/>
            <person name="Kratchmarova I."/>
            <person name="Kassem M."/>
            <person name="Mann M."/>
            <person name="Olsen J.V."/>
            <person name="Blagoev B."/>
        </authorList>
    </citation>
    <scope>PHOSPHORYLATION [LARGE SCALE ANALYSIS] AT SER-213</scope>
    <scope>IDENTIFICATION BY MASS SPECTROMETRY [LARGE SCALE ANALYSIS]</scope>
</reference>
<name>MREG_HUMAN</name>
<sequence length="214" mass="24927">MGLRDWLRTVCCCCGCECLEERALPEKEPLVSDNNPYSSFGATLVRDDEKNLWSMPHDVSHTEADDDRTLYNLIVIRNQQAKDSEEWQKLNYDIHTLRQVRREVRNRWKCILEDLGFQKEADSLLSVTKLSTISDSKNTRKAREMLLKLAEETNIFPTSWELSERYLFVVDRLIALDAAEEFFKLARRTYPKKPGVPCLADGQKELHYLPFPSP</sequence>
<protein>
    <recommendedName>
        <fullName>Melanoregulin</fullName>
    </recommendedName>
    <alternativeName>
        <fullName>Dilute suppressor protein homolog</fullName>
    </alternativeName>
</protein>
<comment type="function">
    <text evidence="1 5">Probably functions as a cargo-recognition protein that couples cytoplasmic vesicles to the transport machinery. Plays a role in hair pigmentation, a process that involves shedding of melanosome-containing vesicles from melanocytes, followed by phagocytosis of the melanosome-containing vesicles by keratinocytes. Functions on melanosomes as receptor for RILP and the complex formed by RILP and DCTN1, and thereby contributes to retrograde melanosome transport from the cell periphery to the center. Overexpression causes accumulation of late endosomes and/or lysosomes at the microtubule organising center (MTOC) at the center of the cell. Probably binds cholesterol and requires the presence of cholesterol in membranes to function in microtubule-mediated retrograde organelle transport. Binds phosphatidylinositol 3-phosphate, phosphatidylinositol 4-phosphate, phosphatidylinositol 5-phosphate and phosphatidylinositol 3,5-bisphosphate, but not phosphatidylinositol 3,4-bisphosphate or phosphatidylinositol 4,5-bisphosphate (By similarity). Required for normal phagosome clearing and normal activation of lysosomal enzymes in lysosomes from retinal pigment epithelium cells (PubMed:19240024). Required for normal degradation of the lipofuscin component N-retinylidene-N-retinylethanolamine (A2E) in the eye. May function in membrane fusion and regulate the biogenesis of disk membranes of photoreceptor rod cells (By similarity).</text>
</comment>
<comment type="subunit">
    <text evidence="1">Identified in a complex with RILP and DCTN1; interacts directly with RILP, but does not interact directly with DCTN1. Interacts with PRPH2.</text>
</comment>
<comment type="interaction">
    <interactant intactId="EBI-10978787">
        <id>Q8N565</id>
    </interactant>
    <interactant intactId="EBI-750700">
        <id>Q8N9N8</id>
        <label>EIF1AD</label>
    </interactant>
    <organismsDiffer>false</organismsDiffer>
    <experiments>3</experiments>
</comment>
<comment type="subcellular location">
    <subcellularLocation>
        <location evidence="1">Apical cell membrane</location>
        <topology evidence="1">Peripheral membrane protein</topology>
    </subcellularLocation>
    <subcellularLocation>
        <location evidence="1">Melanosome membrane</location>
        <topology evidence="1">Lipid-anchor</topology>
    </subcellularLocation>
    <subcellularLocation>
        <location evidence="1">Lysosome membrane</location>
        <topology evidence="1">Lipid-anchor</topology>
    </subcellularLocation>
    <subcellularLocation>
        <location evidence="1">Cytoplasmic vesicle membrane</location>
    </subcellularLocation>
    <text evidence="1">Localizes to the inner segment and basal outer segment of rods in the retina.</text>
</comment>
<comment type="alternative products">
    <event type="alternative splicing"/>
    <isoform>
        <id>Q8N565-1</id>
        <name>1</name>
        <sequence type="displayed"/>
    </isoform>
    <isoform>
        <id>Q8N565-2</id>
        <name>2</name>
        <sequence type="described" ref="VSP_026387"/>
    </isoform>
</comment>
<comment type="tissue specificity">
    <text evidence="4">Expressed in photoreceptor cells (at protein level).</text>
</comment>
<comment type="PTM">
    <text evidence="1">Palmitoylated. Palmitoylation is required to maintain the protein at the melanosome membrane.</text>
</comment>
<comment type="similarity">
    <text evidence="7">Belongs to the melanoregulin family.</text>
</comment>
<proteinExistence type="evidence at protein level"/>